<keyword id="KW-0408">Iron</keyword>
<keyword id="KW-0411">Iron-sulfur</keyword>
<keyword id="KW-0479">Metal-binding</keyword>
<keyword id="KW-0535">Nitrogen fixation</keyword>
<keyword id="KW-0614">Plasmid</keyword>
<keyword id="KW-0663">Pyridoxal phosphate</keyword>
<keyword id="KW-1185">Reference proteome</keyword>
<keyword id="KW-0808">Transferase</keyword>
<dbReference type="EC" id="2.8.1.7" evidence="2"/>
<dbReference type="EMBL" id="U00090">
    <property type="protein sequence ID" value="AAB91919.1"/>
    <property type="molecule type" value="Genomic_DNA"/>
</dbReference>
<dbReference type="RefSeq" id="NP_444132.1">
    <property type="nucleotide sequence ID" value="NC_000914.2"/>
</dbReference>
<dbReference type="RefSeq" id="WP_010875134.1">
    <property type="nucleotide sequence ID" value="NC_000914.2"/>
</dbReference>
<dbReference type="SMR" id="P55690"/>
<dbReference type="KEGG" id="rhi:NGR_a00930"/>
<dbReference type="PATRIC" id="fig|394.7.peg.83"/>
<dbReference type="eggNOG" id="COG1104">
    <property type="taxonomic scope" value="Bacteria"/>
</dbReference>
<dbReference type="HOGENOM" id="CLU_003433_0_0_5"/>
<dbReference type="OrthoDB" id="9808002at2"/>
<dbReference type="Proteomes" id="UP000001054">
    <property type="component" value="Plasmid pNGR234a"/>
</dbReference>
<dbReference type="GO" id="GO:0031071">
    <property type="term" value="F:cysteine desulfurase activity"/>
    <property type="evidence" value="ECO:0007669"/>
    <property type="project" value="UniProtKB-EC"/>
</dbReference>
<dbReference type="GO" id="GO:0051536">
    <property type="term" value="F:iron-sulfur cluster binding"/>
    <property type="evidence" value="ECO:0007669"/>
    <property type="project" value="UniProtKB-KW"/>
</dbReference>
<dbReference type="GO" id="GO:0046872">
    <property type="term" value="F:metal ion binding"/>
    <property type="evidence" value="ECO:0007669"/>
    <property type="project" value="UniProtKB-KW"/>
</dbReference>
<dbReference type="GO" id="GO:0030170">
    <property type="term" value="F:pyridoxal phosphate binding"/>
    <property type="evidence" value="ECO:0007669"/>
    <property type="project" value="InterPro"/>
</dbReference>
<dbReference type="GO" id="GO:0006520">
    <property type="term" value="P:amino acid metabolic process"/>
    <property type="evidence" value="ECO:0007669"/>
    <property type="project" value="InterPro"/>
</dbReference>
<dbReference type="GO" id="GO:0009399">
    <property type="term" value="P:nitrogen fixation"/>
    <property type="evidence" value="ECO:0007669"/>
    <property type="project" value="UniProtKB-KW"/>
</dbReference>
<dbReference type="FunFam" id="3.40.640.10:FF:000084">
    <property type="entry name" value="IscS-like cysteine desulfurase"/>
    <property type="match status" value="1"/>
</dbReference>
<dbReference type="Gene3D" id="1.10.260.50">
    <property type="match status" value="1"/>
</dbReference>
<dbReference type="Gene3D" id="3.90.1150.10">
    <property type="entry name" value="Aspartate Aminotransferase, domain 1"/>
    <property type="match status" value="1"/>
</dbReference>
<dbReference type="Gene3D" id="3.40.640.10">
    <property type="entry name" value="Type I PLP-dependent aspartate aminotransferase-like (Major domain)"/>
    <property type="match status" value="1"/>
</dbReference>
<dbReference type="InterPro" id="IPR000192">
    <property type="entry name" value="Aminotrans_V_dom"/>
</dbReference>
<dbReference type="InterPro" id="IPR020578">
    <property type="entry name" value="Aminotrans_V_PyrdxlP_BS"/>
</dbReference>
<dbReference type="InterPro" id="IPR017772">
    <property type="entry name" value="Cys_deSase_NifS_bac/arc"/>
</dbReference>
<dbReference type="InterPro" id="IPR016454">
    <property type="entry name" value="Cysteine_dSase"/>
</dbReference>
<dbReference type="InterPro" id="IPR015424">
    <property type="entry name" value="PyrdxlP-dep_Trfase"/>
</dbReference>
<dbReference type="InterPro" id="IPR015421">
    <property type="entry name" value="PyrdxlP-dep_Trfase_major"/>
</dbReference>
<dbReference type="InterPro" id="IPR015422">
    <property type="entry name" value="PyrdxlP-dep_Trfase_small"/>
</dbReference>
<dbReference type="NCBIfam" id="TIGR03402">
    <property type="entry name" value="FeS_nifS"/>
    <property type="match status" value="1"/>
</dbReference>
<dbReference type="PANTHER" id="PTHR11601:SF34">
    <property type="entry name" value="CYSTEINE DESULFURASE"/>
    <property type="match status" value="1"/>
</dbReference>
<dbReference type="PANTHER" id="PTHR11601">
    <property type="entry name" value="CYSTEINE DESULFURYLASE FAMILY MEMBER"/>
    <property type="match status" value="1"/>
</dbReference>
<dbReference type="Pfam" id="PF00266">
    <property type="entry name" value="Aminotran_5"/>
    <property type="match status" value="1"/>
</dbReference>
<dbReference type="PIRSF" id="PIRSF005572">
    <property type="entry name" value="NifS"/>
    <property type="match status" value="1"/>
</dbReference>
<dbReference type="SUPFAM" id="SSF53383">
    <property type="entry name" value="PLP-dependent transferases"/>
    <property type="match status" value="1"/>
</dbReference>
<dbReference type="PROSITE" id="PS00595">
    <property type="entry name" value="AA_TRANSFER_CLASS_5"/>
    <property type="match status" value="1"/>
</dbReference>
<feature type="chain" id="PRO_0000150257" description="Cysteine desulfurase">
    <location>
        <begin position="1"/>
        <end position="387"/>
    </location>
</feature>
<feature type="active site" description="Cysteine persulfide intermediate" evidence="2">
    <location>
        <position position="326"/>
    </location>
</feature>
<feature type="binding site" evidence="3">
    <location>
        <begin position="72"/>
        <end position="73"/>
    </location>
    <ligand>
        <name>pyridoxal 5'-phosphate</name>
        <dbReference type="ChEBI" id="CHEBI:597326"/>
    </ligand>
</feature>
<feature type="binding site" evidence="1">
    <location>
        <position position="152"/>
    </location>
    <ligand>
        <name>pyridoxal 5'-phosphate</name>
        <dbReference type="ChEBI" id="CHEBI:597326"/>
    </ligand>
</feature>
<feature type="binding site" evidence="3">
    <location>
        <position position="180"/>
    </location>
    <ligand>
        <name>pyridoxal 5'-phosphate</name>
        <dbReference type="ChEBI" id="CHEBI:597326"/>
    </ligand>
</feature>
<feature type="binding site" evidence="3">
    <location>
        <begin position="200"/>
        <end position="202"/>
    </location>
    <ligand>
        <name>pyridoxal 5'-phosphate</name>
        <dbReference type="ChEBI" id="CHEBI:597326"/>
    </ligand>
</feature>
<feature type="binding site" evidence="3">
    <location>
        <position position="238"/>
    </location>
    <ligand>
        <name>pyridoxal 5'-phosphate</name>
        <dbReference type="ChEBI" id="CHEBI:597326"/>
    </ligand>
</feature>
<feature type="binding site" description="via persulfide group" evidence="1">
    <location>
        <position position="326"/>
    </location>
    <ligand>
        <name>[2Fe-2S] cluster</name>
        <dbReference type="ChEBI" id="CHEBI:190135"/>
    </ligand>
</feature>
<feature type="modified residue" description="N6-(pyridoxal phosphate)lysine" evidence="3">
    <location>
        <position position="203"/>
    </location>
</feature>
<proteinExistence type="inferred from homology"/>
<gene>
    <name evidence="2" type="primary">nifS</name>
    <name type="ordered locus">NGR_a00930</name>
    <name type="ORF">y4wL</name>
</gene>
<name>NIFS_SINFN</name>
<reference key="1">
    <citation type="journal article" date="1997" name="Nature">
        <title>Molecular basis of symbiosis between Rhizobium and legumes.</title>
        <authorList>
            <person name="Freiberg C.A."/>
            <person name="Fellay R."/>
            <person name="Bairoch A."/>
            <person name="Broughton W.J."/>
            <person name="Rosenthal A."/>
            <person name="Perret X."/>
        </authorList>
    </citation>
    <scope>NUCLEOTIDE SEQUENCE [LARGE SCALE GENOMIC DNA]</scope>
    <source>
        <strain>NBRC 101917 / NGR234</strain>
    </source>
</reference>
<reference key="2">
    <citation type="journal article" date="2009" name="Appl. Environ. Microbiol.">
        <title>Rhizobium sp. strain NGR234 possesses a remarkable number of secretion systems.</title>
        <authorList>
            <person name="Schmeisser C."/>
            <person name="Liesegang H."/>
            <person name="Krysciak D."/>
            <person name="Bakkou N."/>
            <person name="Le Quere A."/>
            <person name="Wollherr A."/>
            <person name="Heinemeyer I."/>
            <person name="Morgenstern B."/>
            <person name="Pommerening-Roeser A."/>
            <person name="Flores M."/>
            <person name="Palacios R."/>
            <person name="Brenner S."/>
            <person name="Gottschalk G."/>
            <person name="Schmitz R.A."/>
            <person name="Broughton W.J."/>
            <person name="Perret X."/>
            <person name="Strittmatter A.W."/>
            <person name="Streit W.R."/>
        </authorList>
    </citation>
    <scope>NUCLEOTIDE SEQUENCE [LARGE SCALE GENOMIC DNA]</scope>
    <source>
        <strain>NBRC 101917 / NGR234</strain>
    </source>
</reference>
<comment type="function">
    <text evidence="2">Catalyzes the removal of elemental sulfur atoms from cysteine to produce alanine. Seems to participate in the biosynthesis of the nitrogenase metalloclusters by providing the inorganic sulfur required for the Fe-S core formation.</text>
</comment>
<comment type="catalytic activity">
    <reaction evidence="2">
        <text>(sulfur carrier)-H + L-cysteine = (sulfur carrier)-SH + L-alanine</text>
        <dbReference type="Rhea" id="RHEA:43892"/>
        <dbReference type="Rhea" id="RHEA-COMP:14737"/>
        <dbReference type="Rhea" id="RHEA-COMP:14739"/>
        <dbReference type="ChEBI" id="CHEBI:29917"/>
        <dbReference type="ChEBI" id="CHEBI:35235"/>
        <dbReference type="ChEBI" id="CHEBI:57972"/>
        <dbReference type="ChEBI" id="CHEBI:64428"/>
        <dbReference type="EC" id="2.8.1.7"/>
    </reaction>
</comment>
<comment type="cofactor">
    <cofactor evidence="2">
        <name>pyridoxal 5'-phosphate</name>
        <dbReference type="ChEBI" id="CHEBI:597326"/>
    </cofactor>
</comment>
<comment type="subunit">
    <text evidence="2">Homodimer.</text>
</comment>
<comment type="similarity">
    <text evidence="4">Belongs to the class-V pyridoxal-phosphate-dependent aminotransferase family. NifS/IscS subfamily.</text>
</comment>
<evidence type="ECO:0000250" key="1">
    <source>
        <dbReference type="UniProtKB" id="O29689"/>
    </source>
</evidence>
<evidence type="ECO:0000250" key="2">
    <source>
        <dbReference type="UniProtKB" id="P05341"/>
    </source>
</evidence>
<evidence type="ECO:0000250" key="3">
    <source>
        <dbReference type="UniProtKB" id="P0A6B9"/>
    </source>
</evidence>
<evidence type="ECO:0000305" key="4"/>
<accession>P55690</accession>
<geneLocation type="plasmid">
    <name>sym pNGR234a</name>
</geneLocation>
<sequence length="387" mass="41617">MRPIYLDNNATTRVDAEVLQAMLPFFADVFGNASSMHDAGATAGAAINVARRQLQALIGAKFDPEITFTSGGTESNNAAILSGLEAMPERTEIVTSAVEHPAVLTLCTHLEKTRGTKVHKVPVDHQGRLDLDAYQDALTHRVAIVSIMWANNETGTIFPVVKLAEMAKKVGAIFHTDAVQAIGKLPIDLKSTAIDMLSLSAHKFHGPKGVGALYIKRGVPFHALIKGGHQERDRRAGTENTPGIVGLGKAAELALDCMDKDNAIIRSFRDRLEKGLLERVPQVFVMGDPVTRLPNTTSIAFEGVGGEAMQFLLNRHGIACSSGSACTSRSLSTSHVLKAMGTPHRQAVGAVRFSLSGYNCEEDIDRVLRVIPAVVKKLRESRPVFAG</sequence>
<organism>
    <name type="scientific">Sinorhizobium fredii (strain NBRC 101917 / NGR234)</name>
    <dbReference type="NCBI Taxonomy" id="394"/>
    <lineage>
        <taxon>Bacteria</taxon>
        <taxon>Pseudomonadati</taxon>
        <taxon>Pseudomonadota</taxon>
        <taxon>Alphaproteobacteria</taxon>
        <taxon>Hyphomicrobiales</taxon>
        <taxon>Rhizobiaceae</taxon>
        <taxon>Sinorhizobium/Ensifer group</taxon>
        <taxon>Sinorhizobium</taxon>
    </lineage>
</organism>
<protein>
    <recommendedName>
        <fullName evidence="2">Cysteine desulfurase</fullName>
        <ecNumber evidence="2">2.8.1.7</ecNumber>
    </recommendedName>
    <alternativeName>
        <fullName evidence="2">Nitrogenase metalloclusters biosynthesis protein NifS</fullName>
    </alternativeName>
</protein>